<name>RSMG_SINMW</name>
<proteinExistence type="inferred from homology"/>
<gene>
    <name evidence="1" type="primary">rsmG</name>
    <name type="ordered locus">Smed_3203</name>
</gene>
<reference key="1">
    <citation type="submission" date="2007-06" db="EMBL/GenBank/DDBJ databases">
        <title>Complete sequence of Sinorhizobium medicae WSM419 chromosome.</title>
        <authorList>
            <consortium name="US DOE Joint Genome Institute"/>
            <person name="Copeland A."/>
            <person name="Lucas S."/>
            <person name="Lapidus A."/>
            <person name="Barry K."/>
            <person name="Glavina del Rio T."/>
            <person name="Dalin E."/>
            <person name="Tice H."/>
            <person name="Pitluck S."/>
            <person name="Chain P."/>
            <person name="Malfatti S."/>
            <person name="Shin M."/>
            <person name="Vergez L."/>
            <person name="Schmutz J."/>
            <person name="Larimer F."/>
            <person name="Land M."/>
            <person name="Hauser L."/>
            <person name="Kyrpides N."/>
            <person name="Mikhailova N."/>
            <person name="Reeve W.G."/>
            <person name="Richardson P."/>
        </authorList>
    </citation>
    <scope>NUCLEOTIDE SEQUENCE [LARGE SCALE GENOMIC DNA]</scope>
    <source>
        <strain>WSM419</strain>
    </source>
</reference>
<dbReference type="EC" id="2.1.1.170" evidence="1"/>
<dbReference type="EMBL" id="CP000738">
    <property type="protein sequence ID" value="ABR62027.1"/>
    <property type="molecule type" value="Genomic_DNA"/>
</dbReference>
<dbReference type="RefSeq" id="WP_012067408.1">
    <property type="nucleotide sequence ID" value="NC_009636.1"/>
</dbReference>
<dbReference type="RefSeq" id="YP_001328862.1">
    <property type="nucleotide sequence ID" value="NC_009636.1"/>
</dbReference>
<dbReference type="SMR" id="A6UEE7"/>
<dbReference type="STRING" id="366394.Smed_3203"/>
<dbReference type="GeneID" id="61610785"/>
<dbReference type="KEGG" id="smd:Smed_3203"/>
<dbReference type="PATRIC" id="fig|366394.8.peg.6441"/>
<dbReference type="eggNOG" id="COG0357">
    <property type="taxonomic scope" value="Bacteria"/>
</dbReference>
<dbReference type="HOGENOM" id="CLU_065341_1_1_5"/>
<dbReference type="OrthoDB" id="9808773at2"/>
<dbReference type="Proteomes" id="UP000001108">
    <property type="component" value="Chromosome"/>
</dbReference>
<dbReference type="GO" id="GO:0005829">
    <property type="term" value="C:cytosol"/>
    <property type="evidence" value="ECO:0007669"/>
    <property type="project" value="TreeGrafter"/>
</dbReference>
<dbReference type="GO" id="GO:0070043">
    <property type="term" value="F:rRNA (guanine-N7-)-methyltransferase activity"/>
    <property type="evidence" value="ECO:0007669"/>
    <property type="project" value="UniProtKB-UniRule"/>
</dbReference>
<dbReference type="Gene3D" id="3.40.50.150">
    <property type="entry name" value="Vaccinia Virus protein VP39"/>
    <property type="match status" value="1"/>
</dbReference>
<dbReference type="HAMAP" id="MF_00074">
    <property type="entry name" value="16SrRNA_methyltr_G"/>
    <property type="match status" value="1"/>
</dbReference>
<dbReference type="InterPro" id="IPR003682">
    <property type="entry name" value="rRNA_ssu_MeTfrase_G"/>
</dbReference>
<dbReference type="InterPro" id="IPR029063">
    <property type="entry name" value="SAM-dependent_MTases_sf"/>
</dbReference>
<dbReference type="NCBIfam" id="TIGR00138">
    <property type="entry name" value="rsmG_gidB"/>
    <property type="match status" value="1"/>
</dbReference>
<dbReference type="PANTHER" id="PTHR31760">
    <property type="entry name" value="S-ADENOSYL-L-METHIONINE-DEPENDENT METHYLTRANSFERASES SUPERFAMILY PROTEIN"/>
    <property type="match status" value="1"/>
</dbReference>
<dbReference type="PANTHER" id="PTHR31760:SF0">
    <property type="entry name" value="S-ADENOSYL-L-METHIONINE-DEPENDENT METHYLTRANSFERASES SUPERFAMILY PROTEIN"/>
    <property type="match status" value="1"/>
</dbReference>
<dbReference type="Pfam" id="PF02527">
    <property type="entry name" value="GidB"/>
    <property type="match status" value="1"/>
</dbReference>
<dbReference type="PIRSF" id="PIRSF003078">
    <property type="entry name" value="GidB"/>
    <property type="match status" value="1"/>
</dbReference>
<dbReference type="SUPFAM" id="SSF53335">
    <property type="entry name" value="S-adenosyl-L-methionine-dependent methyltransferases"/>
    <property type="match status" value="1"/>
</dbReference>
<sequence length="213" mass="23781">MQTSLNRALNGLRVSRETVEKLEHFASLFQKWARSINLVAPSTLDDLWRRHILDSIQLFQLSPAPKTWVDLGSGGGFPGVITAICLSETESGWVHLVESNNKKAAFLRVALRETAARGTVHPIRIEEAPAEIPTCDAISARALSDLSQLLEYCAPWMTVEASRTIAFFHKGRDYQLEIDKAVSRFQFDLVKHASVVEPDSVVLEVANLSRRTK</sequence>
<feature type="chain" id="PRO_1000010211" description="Ribosomal RNA small subunit methyltransferase G">
    <location>
        <begin position="1"/>
        <end position="213"/>
    </location>
</feature>
<feature type="binding site" evidence="1">
    <location>
        <position position="72"/>
    </location>
    <ligand>
        <name>S-adenosyl-L-methionine</name>
        <dbReference type="ChEBI" id="CHEBI:59789"/>
    </ligand>
</feature>
<feature type="binding site" evidence="1">
    <location>
        <position position="77"/>
    </location>
    <ligand>
        <name>S-adenosyl-L-methionine</name>
        <dbReference type="ChEBI" id="CHEBI:59789"/>
    </ligand>
</feature>
<feature type="binding site" evidence="1">
    <location>
        <begin position="125"/>
        <end position="126"/>
    </location>
    <ligand>
        <name>S-adenosyl-L-methionine</name>
        <dbReference type="ChEBI" id="CHEBI:59789"/>
    </ligand>
</feature>
<feature type="binding site" evidence="1">
    <location>
        <position position="141"/>
    </location>
    <ligand>
        <name>S-adenosyl-L-methionine</name>
        <dbReference type="ChEBI" id="CHEBI:59789"/>
    </ligand>
</feature>
<evidence type="ECO:0000255" key="1">
    <source>
        <dbReference type="HAMAP-Rule" id="MF_00074"/>
    </source>
</evidence>
<organism>
    <name type="scientific">Sinorhizobium medicae (strain WSM419)</name>
    <name type="common">Ensifer medicae</name>
    <dbReference type="NCBI Taxonomy" id="366394"/>
    <lineage>
        <taxon>Bacteria</taxon>
        <taxon>Pseudomonadati</taxon>
        <taxon>Pseudomonadota</taxon>
        <taxon>Alphaproteobacteria</taxon>
        <taxon>Hyphomicrobiales</taxon>
        <taxon>Rhizobiaceae</taxon>
        <taxon>Sinorhizobium/Ensifer group</taxon>
        <taxon>Sinorhizobium</taxon>
    </lineage>
</organism>
<keyword id="KW-0963">Cytoplasm</keyword>
<keyword id="KW-0489">Methyltransferase</keyword>
<keyword id="KW-0698">rRNA processing</keyword>
<keyword id="KW-0949">S-adenosyl-L-methionine</keyword>
<keyword id="KW-0808">Transferase</keyword>
<accession>A6UEE7</accession>
<protein>
    <recommendedName>
        <fullName evidence="1">Ribosomal RNA small subunit methyltransferase G</fullName>
        <ecNumber evidence="1">2.1.1.170</ecNumber>
    </recommendedName>
    <alternativeName>
        <fullName evidence="1">16S rRNA 7-methylguanosine methyltransferase</fullName>
        <shortName evidence="1">16S rRNA m7G methyltransferase</shortName>
    </alternativeName>
</protein>
<comment type="function">
    <text evidence="1">Specifically methylates the N7 position of guanine in position 527 of 16S rRNA.</text>
</comment>
<comment type="catalytic activity">
    <reaction evidence="1">
        <text>guanosine(527) in 16S rRNA + S-adenosyl-L-methionine = N(7)-methylguanosine(527) in 16S rRNA + S-adenosyl-L-homocysteine</text>
        <dbReference type="Rhea" id="RHEA:42732"/>
        <dbReference type="Rhea" id="RHEA-COMP:10209"/>
        <dbReference type="Rhea" id="RHEA-COMP:10210"/>
        <dbReference type="ChEBI" id="CHEBI:57856"/>
        <dbReference type="ChEBI" id="CHEBI:59789"/>
        <dbReference type="ChEBI" id="CHEBI:74269"/>
        <dbReference type="ChEBI" id="CHEBI:74480"/>
        <dbReference type="EC" id="2.1.1.170"/>
    </reaction>
</comment>
<comment type="subcellular location">
    <subcellularLocation>
        <location evidence="1">Cytoplasm</location>
    </subcellularLocation>
</comment>
<comment type="similarity">
    <text evidence="1">Belongs to the methyltransferase superfamily. RNA methyltransferase RsmG family.</text>
</comment>